<sequence>MARYRGPVVKLMRREGLNLFLKNSHTLHKEKSSLEKRKYPPGLPPKKKGKITEYGAQLREKQKVKRAYGVLEKQFRRYFEEASHTPGIPGENLLQFLERRLDNVLYRMGFAVTRRQARNFVAHRHILVNGHRVDICSYRVNIGDKIEIREKFQKSAFIEENIKLAQAINRTASWVSVDYAKFSGEVLSLPTRDHIDIPVKEQVIVELYSK</sequence>
<protein>
    <recommendedName>
        <fullName evidence="1">Small ribosomal subunit protein uS4</fullName>
    </recommendedName>
    <alternativeName>
        <fullName evidence="3">30S ribosomal protein S4</fullName>
    </alternativeName>
</protein>
<keyword id="KW-1185">Reference proteome</keyword>
<keyword id="KW-0687">Ribonucleoprotein</keyword>
<keyword id="KW-0689">Ribosomal protein</keyword>
<keyword id="KW-0694">RNA-binding</keyword>
<keyword id="KW-0699">rRNA-binding</keyword>
<evidence type="ECO:0000255" key="1">
    <source>
        <dbReference type="HAMAP-Rule" id="MF_01306"/>
    </source>
</evidence>
<evidence type="ECO:0000256" key="2">
    <source>
        <dbReference type="SAM" id="MobiDB-lite"/>
    </source>
</evidence>
<evidence type="ECO:0000305" key="3"/>
<organism>
    <name type="scientific">Leptospira biflexa serovar Patoc (strain Patoc 1 / ATCC 23582 / Paris)</name>
    <dbReference type="NCBI Taxonomy" id="456481"/>
    <lineage>
        <taxon>Bacteria</taxon>
        <taxon>Pseudomonadati</taxon>
        <taxon>Spirochaetota</taxon>
        <taxon>Spirochaetia</taxon>
        <taxon>Leptospirales</taxon>
        <taxon>Leptospiraceae</taxon>
        <taxon>Leptospira</taxon>
    </lineage>
</organism>
<accession>B0SSF3</accession>
<feature type="chain" id="PRO_1000140752" description="Small ribosomal subunit protein uS4">
    <location>
        <begin position="1"/>
        <end position="210"/>
    </location>
</feature>
<feature type="domain" description="S4 RNA-binding" evidence="1">
    <location>
        <begin position="99"/>
        <end position="162"/>
    </location>
</feature>
<feature type="region of interest" description="Disordered" evidence="2">
    <location>
        <begin position="30"/>
        <end position="49"/>
    </location>
</feature>
<dbReference type="EMBL" id="CP000786">
    <property type="protein sequence ID" value="ABZ98043.1"/>
    <property type="molecule type" value="Genomic_DNA"/>
</dbReference>
<dbReference type="RefSeq" id="WP_012388921.1">
    <property type="nucleotide sequence ID" value="NC_010602.1"/>
</dbReference>
<dbReference type="SMR" id="B0SSF3"/>
<dbReference type="STRING" id="456481.LEPBI_I1940"/>
<dbReference type="KEGG" id="lbi:LEPBI_I1940"/>
<dbReference type="HOGENOM" id="CLU_092403_0_2_12"/>
<dbReference type="OrthoDB" id="9803672at2"/>
<dbReference type="BioCyc" id="LBIF456481:LEPBI_RS09585-MONOMER"/>
<dbReference type="Proteomes" id="UP000001847">
    <property type="component" value="Chromosome I"/>
</dbReference>
<dbReference type="GO" id="GO:0015935">
    <property type="term" value="C:small ribosomal subunit"/>
    <property type="evidence" value="ECO:0007669"/>
    <property type="project" value="InterPro"/>
</dbReference>
<dbReference type="GO" id="GO:0019843">
    <property type="term" value="F:rRNA binding"/>
    <property type="evidence" value="ECO:0007669"/>
    <property type="project" value="UniProtKB-UniRule"/>
</dbReference>
<dbReference type="GO" id="GO:0003735">
    <property type="term" value="F:structural constituent of ribosome"/>
    <property type="evidence" value="ECO:0007669"/>
    <property type="project" value="InterPro"/>
</dbReference>
<dbReference type="GO" id="GO:0042274">
    <property type="term" value="P:ribosomal small subunit biogenesis"/>
    <property type="evidence" value="ECO:0007669"/>
    <property type="project" value="TreeGrafter"/>
</dbReference>
<dbReference type="GO" id="GO:0006412">
    <property type="term" value="P:translation"/>
    <property type="evidence" value="ECO:0007669"/>
    <property type="project" value="UniProtKB-UniRule"/>
</dbReference>
<dbReference type="CDD" id="cd00165">
    <property type="entry name" value="S4"/>
    <property type="match status" value="1"/>
</dbReference>
<dbReference type="FunFam" id="3.10.290.10:FF:000001">
    <property type="entry name" value="30S ribosomal protein S4"/>
    <property type="match status" value="1"/>
</dbReference>
<dbReference type="Gene3D" id="1.10.1050.10">
    <property type="entry name" value="Ribosomal Protein S4 Delta 41, Chain A, domain 1"/>
    <property type="match status" value="1"/>
</dbReference>
<dbReference type="Gene3D" id="3.10.290.10">
    <property type="entry name" value="RNA-binding S4 domain"/>
    <property type="match status" value="1"/>
</dbReference>
<dbReference type="HAMAP" id="MF_01306_B">
    <property type="entry name" value="Ribosomal_uS4_B"/>
    <property type="match status" value="1"/>
</dbReference>
<dbReference type="InterPro" id="IPR022801">
    <property type="entry name" value="Ribosomal_uS4"/>
</dbReference>
<dbReference type="InterPro" id="IPR005709">
    <property type="entry name" value="Ribosomal_uS4_bac-type"/>
</dbReference>
<dbReference type="InterPro" id="IPR018079">
    <property type="entry name" value="Ribosomal_uS4_CS"/>
</dbReference>
<dbReference type="InterPro" id="IPR001912">
    <property type="entry name" value="Ribosomal_uS4_N"/>
</dbReference>
<dbReference type="InterPro" id="IPR002942">
    <property type="entry name" value="S4_RNA-bd"/>
</dbReference>
<dbReference type="InterPro" id="IPR036986">
    <property type="entry name" value="S4_RNA-bd_sf"/>
</dbReference>
<dbReference type="NCBIfam" id="NF003717">
    <property type="entry name" value="PRK05327.1"/>
    <property type="match status" value="1"/>
</dbReference>
<dbReference type="NCBIfam" id="TIGR01017">
    <property type="entry name" value="rpsD_bact"/>
    <property type="match status" value="1"/>
</dbReference>
<dbReference type="PANTHER" id="PTHR11831">
    <property type="entry name" value="30S 40S RIBOSOMAL PROTEIN"/>
    <property type="match status" value="1"/>
</dbReference>
<dbReference type="PANTHER" id="PTHR11831:SF4">
    <property type="entry name" value="SMALL RIBOSOMAL SUBUNIT PROTEIN US4M"/>
    <property type="match status" value="1"/>
</dbReference>
<dbReference type="Pfam" id="PF00163">
    <property type="entry name" value="Ribosomal_S4"/>
    <property type="match status" value="1"/>
</dbReference>
<dbReference type="Pfam" id="PF01479">
    <property type="entry name" value="S4"/>
    <property type="match status" value="1"/>
</dbReference>
<dbReference type="SMART" id="SM01390">
    <property type="entry name" value="Ribosomal_S4"/>
    <property type="match status" value="1"/>
</dbReference>
<dbReference type="SMART" id="SM00363">
    <property type="entry name" value="S4"/>
    <property type="match status" value="1"/>
</dbReference>
<dbReference type="SUPFAM" id="SSF55174">
    <property type="entry name" value="Alpha-L RNA-binding motif"/>
    <property type="match status" value="1"/>
</dbReference>
<dbReference type="PROSITE" id="PS00632">
    <property type="entry name" value="RIBOSOMAL_S4"/>
    <property type="match status" value="1"/>
</dbReference>
<dbReference type="PROSITE" id="PS50889">
    <property type="entry name" value="S4"/>
    <property type="match status" value="1"/>
</dbReference>
<proteinExistence type="inferred from homology"/>
<comment type="function">
    <text evidence="1">One of the primary rRNA binding proteins, it binds directly to 16S rRNA where it nucleates assembly of the body of the 30S subunit.</text>
</comment>
<comment type="function">
    <text evidence="1">With S5 and S12 plays an important role in translational accuracy.</text>
</comment>
<comment type="subunit">
    <text evidence="1">Part of the 30S ribosomal subunit. Contacts protein S5. The interaction surface between S4 and S5 is involved in control of translational fidelity.</text>
</comment>
<comment type="similarity">
    <text evidence="1">Belongs to the universal ribosomal protein uS4 family.</text>
</comment>
<gene>
    <name evidence="1" type="primary">rpsD</name>
    <name type="ordered locus">LEPBI_I1940</name>
</gene>
<reference key="1">
    <citation type="journal article" date="2008" name="PLoS ONE">
        <title>Genome sequence of the saprophyte Leptospira biflexa provides insights into the evolution of Leptospira and the pathogenesis of leptospirosis.</title>
        <authorList>
            <person name="Picardeau M."/>
            <person name="Bulach D.M."/>
            <person name="Bouchier C."/>
            <person name="Zuerner R.L."/>
            <person name="Zidane N."/>
            <person name="Wilson P.J."/>
            <person name="Creno S."/>
            <person name="Kuczek E.S."/>
            <person name="Bommezzadri S."/>
            <person name="Davis J.C."/>
            <person name="McGrath A."/>
            <person name="Johnson M.J."/>
            <person name="Boursaux-Eude C."/>
            <person name="Seemann T."/>
            <person name="Rouy Z."/>
            <person name="Coppel R.L."/>
            <person name="Rood J.I."/>
            <person name="Lajus A."/>
            <person name="Davies J.K."/>
            <person name="Medigue C."/>
            <person name="Adler B."/>
        </authorList>
    </citation>
    <scope>NUCLEOTIDE SEQUENCE [LARGE SCALE GENOMIC DNA]</scope>
    <source>
        <strain>Patoc 1 / ATCC 23582 / Paris</strain>
    </source>
</reference>
<name>RS4_LEPBP</name>